<keyword id="KW-0004">4Fe-4S</keyword>
<keyword id="KW-0997">Cell inner membrane</keyword>
<keyword id="KW-1003">Cell membrane</keyword>
<keyword id="KW-0249">Electron transport</keyword>
<keyword id="KW-0408">Iron</keyword>
<keyword id="KW-0411">Iron-sulfur</keyword>
<keyword id="KW-0472">Membrane</keyword>
<keyword id="KW-0479">Metal-binding</keyword>
<keyword id="KW-1185">Reference proteome</keyword>
<keyword id="KW-0677">Repeat</keyword>
<keyword id="KW-1278">Translocase</keyword>
<keyword id="KW-0813">Transport</keyword>
<organism>
    <name type="scientific">Tolumonas auensis (strain DSM 9187 / NBRC 110442 / TA 4)</name>
    <dbReference type="NCBI Taxonomy" id="595494"/>
    <lineage>
        <taxon>Bacteria</taxon>
        <taxon>Pseudomonadati</taxon>
        <taxon>Pseudomonadota</taxon>
        <taxon>Gammaproteobacteria</taxon>
        <taxon>Aeromonadales</taxon>
        <taxon>Aeromonadaceae</taxon>
        <taxon>Tolumonas</taxon>
    </lineage>
</organism>
<name>RNFB_TOLAT</name>
<protein>
    <recommendedName>
        <fullName evidence="1">Ion-translocating oxidoreductase complex subunit B</fullName>
        <ecNumber evidence="1">7.-.-.-</ecNumber>
    </recommendedName>
    <alternativeName>
        <fullName evidence="1">Rnf electron transport complex subunit B</fullName>
    </alternativeName>
</protein>
<evidence type="ECO:0000255" key="1">
    <source>
        <dbReference type="HAMAP-Rule" id="MF_00463"/>
    </source>
</evidence>
<proteinExistence type="inferred from homology"/>
<gene>
    <name evidence="1" type="primary">rnfB</name>
    <name type="ordered locus">Tola_1448</name>
</gene>
<feature type="chain" id="PRO_1000206301" description="Ion-translocating oxidoreductase complex subunit B">
    <location>
        <begin position="1"/>
        <end position="185"/>
    </location>
</feature>
<feature type="domain" description="4Fe-4S" evidence="1">
    <location>
        <begin position="32"/>
        <end position="90"/>
    </location>
</feature>
<feature type="domain" description="4Fe-4S ferredoxin-type 1" evidence="1">
    <location>
        <begin position="106"/>
        <end position="135"/>
    </location>
</feature>
<feature type="domain" description="4Fe-4S ferredoxin-type 2" evidence="1">
    <location>
        <begin position="136"/>
        <end position="165"/>
    </location>
</feature>
<feature type="region of interest" description="Hydrophobic" evidence="1">
    <location>
        <begin position="1"/>
        <end position="26"/>
    </location>
</feature>
<feature type="binding site" evidence="1">
    <location>
        <position position="49"/>
    </location>
    <ligand>
        <name>[4Fe-4S] cluster</name>
        <dbReference type="ChEBI" id="CHEBI:49883"/>
        <label>1</label>
    </ligand>
</feature>
<feature type="binding site" evidence="1">
    <location>
        <position position="52"/>
    </location>
    <ligand>
        <name>[4Fe-4S] cluster</name>
        <dbReference type="ChEBI" id="CHEBI:49883"/>
        <label>1</label>
    </ligand>
</feature>
<feature type="binding site" evidence="1">
    <location>
        <position position="57"/>
    </location>
    <ligand>
        <name>[4Fe-4S] cluster</name>
        <dbReference type="ChEBI" id="CHEBI:49883"/>
        <label>1</label>
    </ligand>
</feature>
<feature type="binding site" evidence="1">
    <location>
        <position position="73"/>
    </location>
    <ligand>
        <name>[4Fe-4S] cluster</name>
        <dbReference type="ChEBI" id="CHEBI:49883"/>
        <label>1</label>
    </ligand>
</feature>
<feature type="binding site" evidence="1">
    <location>
        <position position="115"/>
    </location>
    <ligand>
        <name>[4Fe-4S] cluster</name>
        <dbReference type="ChEBI" id="CHEBI:49883"/>
        <label>2</label>
    </ligand>
</feature>
<feature type="binding site" evidence="1">
    <location>
        <position position="118"/>
    </location>
    <ligand>
        <name>[4Fe-4S] cluster</name>
        <dbReference type="ChEBI" id="CHEBI:49883"/>
        <label>2</label>
    </ligand>
</feature>
<feature type="binding site" evidence="1">
    <location>
        <position position="121"/>
    </location>
    <ligand>
        <name>[4Fe-4S] cluster</name>
        <dbReference type="ChEBI" id="CHEBI:49883"/>
        <label>2</label>
    </ligand>
</feature>
<feature type="binding site" evidence="1">
    <location>
        <position position="125"/>
    </location>
    <ligand>
        <name>[4Fe-4S] cluster</name>
        <dbReference type="ChEBI" id="CHEBI:49883"/>
        <label>3</label>
    </ligand>
</feature>
<feature type="binding site" evidence="1">
    <location>
        <position position="145"/>
    </location>
    <ligand>
        <name>[4Fe-4S] cluster</name>
        <dbReference type="ChEBI" id="CHEBI:49883"/>
        <label>3</label>
    </ligand>
</feature>
<feature type="binding site" evidence="1">
    <location>
        <position position="148"/>
    </location>
    <ligand>
        <name>[4Fe-4S] cluster</name>
        <dbReference type="ChEBI" id="CHEBI:49883"/>
        <label>3</label>
    </ligand>
</feature>
<feature type="binding site" evidence="1">
    <location>
        <position position="151"/>
    </location>
    <ligand>
        <name>[4Fe-4S] cluster</name>
        <dbReference type="ChEBI" id="CHEBI:49883"/>
        <label>3</label>
    </ligand>
</feature>
<feature type="binding site" evidence="1">
    <location>
        <position position="155"/>
    </location>
    <ligand>
        <name>[4Fe-4S] cluster</name>
        <dbReference type="ChEBI" id="CHEBI:49883"/>
        <label>2</label>
    </ligand>
</feature>
<sequence>MNHILLIILIFAALALIFGLLLGFAAIHFKVESDPIVDQLDALLPQTQCGQCGYPGCRPYAEAIANGDSINKCVPGGAQTIQNIADLMGVEPPSDDNELLMAPPKRVAFIHENLCIGCTKCIQACPVDAIIGAPKLMHTILRSECTGCDLCVDPCPTNCIEMIELPATPDRWKWDVETIPVRMVQ</sequence>
<comment type="function">
    <text evidence="1">Part of a membrane-bound complex that couples electron transfer with translocation of ions across the membrane.</text>
</comment>
<comment type="cofactor">
    <cofactor evidence="1">
        <name>[4Fe-4S] cluster</name>
        <dbReference type="ChEBI" id="CHEBI:49883"/>
    </cofactor>
    <text evidence="1">Binds 3 [4Fe-4S] clusters.</text>
</comment>
<comment type="subunit">
    <text evidence="1">The complex is composed of six subunits: RnfA, RnfB, RnfC, RnfD, RnfE and RnfG.</text>
</comment>
<comment type="subcellular location">
    <subcellularLocation>
        <location evidence="1">Cell inner membrane</location>
    </subcellularLocation>
</comment>
<comment type="similarity">
    <text evidence="1">Belongs to the 4Fe4S bacterial-type ferredoxin family. RnfB subfamily.</text>
</comment>
<accession>C4LEP6</accession>
<reference key="1">
    <citation type="submission" date="2009-05" db="EMBL/GenBank/DDBJ databases">
        <title>Complete sequence of Tolumonas auensis DSM 9187.</title>
        <authorList>
            <consortium name="US DOE Joint Genome Institute"/>
            <person name="Lucas S."/>
            <person name="Copeland A."/>
            <person name="Lapidus A."/>
            <person name="Glavina del Rio T."/>
            <person name="Tice H."/>
            <person name="Bruce D."/>
            <person name="Goodwin L."/>
            <person name="Pitluck S."/>
            <person name="Chertkov O."/>
            <person name="Brettin T."/>
            <person name="Detter J.C."/>
            <person name="Han C."/>
            <person name="Larimer F."/>
            <person name="Land M."/>
            <person name="Hauser L."/>
            <person name="Kyrpides N."/>
            <person name="Mikhailova N."/>
            <person name="Spring S."/>
            <person name="Beller H."/>
        </authorList>
    </citation>
    <scope>NUCLEOTIDE SEQUENCE [LARGE SCALE GENOMIC DNA]</scope>
    <source>
        <strain>DSM 9187 / NBRC 110442 / TA 4</strain>
    </source>
</reference>
<dbReference type="EC" id="7.-.-.-" evidence="1"/>
<dbReference type="EMBL" id="CP001616">
    <property type="protein sequence ID" value="ACQ93063.1"/>
    <property type="molecule type" value="Genomic_DNA"/>
</dbReference>
<dbReference type="RefSeq" id="WP_015878535.1">
    <property type="nucleotide sequence ID" value="NC_012691.1"/>
</dbReference>
<dbReference type="STRING" id="595494.Tola_1448"/>
<dbReference type="KEGG" id="tau:Tola_1448"/>
<dbReference type="eggNOG" id="COG2878">
    <property type="taxonomic scope" value="Bacteria"/>
</dbReference>
<dbReference type="HOGENOM" id="CLU_063448_2_0_6"/>
<dbReference type="OrthoDB" id="9789936at2"/>
<dbReference type="Proteomes" id="UP000009073">
    <property type="component" value="Chromosome"/>
</dbReference>
<dbReference type="GO" id="GO:0005886">
    <property type="term" value="C:plasma membrane"/>
    <property type="evidence" value="ECO:0007669"/>
    <property type="project" value="UniProtKB-SubCell"/>
</dbReference>
<dbReference type="GO" id="GO:0051539">
    <property type="term" value="F:4 iron, 4 sulfur cluster binding"/>
    <property type="evidence" value="ECO:0007669"/>
    <property type="project" value="UniProtKB-UniRule"/>
</dbReference>
<dbReference type="GO" id="GO:0009055">
    <property type="term" value="F:electron transfer activity"/>
    <property type="evidence" value="ECO:0007669"/>
    <property type="project" value="InterPro"/>
</dbReference>
<dbReference type="GO" id="GO:0046872">
    <property type="term" value="F:metal ion binding"/>
    <property type="evidence" value="ECO:0007669"/>
    <property type="project" value="UniProtKB-KW"/>
</dbReference>
<dbReference type="GO" id="GO:0022900">
    <property type="term" value="P:electron transport chain"/>
    <property type="evidence" value="ECO:0007669"/>
    <property type="project" value="UniProtKB-UniRule"/>
</dbReference>
<dbReference type="FunFam" id="1.10.15.40:FF:000001">
    <property type="entry name" value="Ion-translocating oxidoreductase complex subunit B"/>
    <property type="match status" value="1"/>
</dbReference>
<dbReference type="Gene3D" id="3.30.70.20">
    <property type="match status" value="2"/>
</dbReference>
<dbReference type="Gene3D" id="1.10.15.40">
    <property type="entry name" value="Electron transport complex subunit B, putative Fe-S cluster"/>
    <property type="match status" value="1"/>
</dbReference>
<dbReference type="HAMAP" id="MF_00463">
    <property type="entry name" value="RsxB_RnfB"/>
    <property type="match status" value="1"/>
</dbReference>
<dbReference type="InterPro" id="IPR007202">
    <property type="entry name" value="4Fe-4S_dom"/>
</dbReference>
<dbReference type="InterPro" id="IPR017896">
    <property type="entry name" value="4Fe4S_Fe-S-bd"/>
</dbReference>
<dbReference type="InterPro" id="IPR017900">
    <property type="entry name" value="4Fe4S_Fe_S_CS"/>
</dbReference>
<dbReference type="InterPro" id="IPR010207">
    <property type="entry name" value="Elect_transpt_cplx_RnfB/RsxB"/>
</dbReference>
<dbReference type="InterPro" id="IPR016463">
    <property type="entry name" value="RnfB/RsxB_Proteobac"/>
</dbReference>
<dbReference type="InterPro" id="IPR050294">
    <property type="entry name" value="RnfB_subfamily"/>
</dbReference>
<dbReference type="NCBIfam" id="NF003475">
    <property type="entry name" value="PRK05113.1"/>
    <property type="match status" value="1"/>
</dbReference>
<dbReference type="NCBIfam" id="TIGR01944">
    <property type="entry name" value="rnfB"/>
    <property type="match status" value="1"/>
</dbReference>
<dbReference type="PANTHER" id="PTHR42859:SF3">
    <property type="entry name" value="ION-TRANSLOCATING OXIDOREDUCTASE COMPLEX SUBUNIT B"/>
    <property type="match status" value="1"/>
</dbReference>
<dbReference type="PANTHER" id="PTHR42859">
    <property type="entry name" value="OXIDOREDUCTASE"/>
    <property type="match status" value="1"/>
</dbReference>
<dbReference type="Pfam" id="PF14697">
    <property type="entry name" value="Fer4_21"/>
    <property type="match status" value="1"/>
</dbReference>
<dbReference type="Pfam" id="PF04060">
    <property type="entry name" value="FeS"/>
    <property type="match status" value="1"/>
</dbReference>
<dbReference type="PIRSF" id="PIRSF005784">
    <property type="entry name" value="Elect_transpt_RnfB"/>
    <property type="match status" value="1"/>
</dbReference>
<dbReference type="SUPFAM" id="SSF54862">
    <property type="entry name" value="4Fe-4S ferredoxins"/>
    <property type="match status" value="1"/>
</dbReference>
<dbReference type="PROSITE" id="PS51656">
    <property type="entry name" value="4FE4S"/>
    <property type="match status" value="1"/>
</dbReference>
<dbReference type="PROSITE" id="PS00198">
    <property type="entry name" value="4FE4S_FER_1"/>
    <property type="match status" value="2"/>
</dbReference>
<dbReference type="PROSITE" id="PS51379">
    <property type="entry name" value="4FE4S_FER_2"/>
    <property type="match status" value="2"/>
</dbReference>